<comment type="function">
    <text evidence="1">Methylates ribosomal protein L11.</text>
</comment>
<comment type="catalytic activity">
    <reaction evidence="1">
        <text>L-lysyl-[protein] + 3 S-adenosyl-L-methionine = N(6),N(6),N(6)-trimethyl-L-lysyl-[protein] + 3 S-adenosyl-L-homocysteine + 3 H(+)</text>
        <dbReference type="Rhea" id="RHEA:54192"/>
        <dbReference type="Rhea" id="RHEA-COMP:9752"/>
        <dbReference type="Rhea" id="RHEA-COMP:13826"/>
        <dbReference type="ChEBI" id="CHEBI:15378"/>
        <dbReference type="ChEBI" id="CHEBI:29969"/>
        <dbReference type="ChEBI" id="CHEBI:57856"/>
        <dbReference type="ChEBI" id="CHEBI:59789"/>
        <dbReference type="ChEBI" id="CHEBI:61961"/>
    </reaction>
</comment>
<comment type="subcellular location">
    <subcellularLocation>
        <location evidence="1">Cytoplasm</location>
    </subcellularLocation>
</comment>
<comment type="similarity">
    <text evidence="1">Belongs to the methyltransferase superfamily. PrmA family.</text>
</comment>
<proteinExistence type="inferred from homology"/>
<evidence type="ECO:0000255" key="1">
    <source>
        <dbReference type="HAMAP-Rule" id="MF_00735"/>
    </source>
</evidence>
<feature type="chain" id="PRO_1000192567" description="Ribosomal protein L11 methyltransferase">
    <location>
        <begin position="1"/>
        <end position="301"/>
    </location>
</feature>
<feature type="binding site" evidence="1">
    <location>
        <position position="146"/>
    </location>
    <ligand>
        <name>S-adenosyl-L-methionine</name>
        <dbReference type="ChEBI" id="CHEBI:59789"/>
    </ligand>
</feature>
<feature type="binding site" evidence="1">
    <location>
        <position position="167"/>
    </location>
    <ligand>
        <name>S-adenosyl-L-methionine</name>
        <dbReference type="ChEBI" id="CHEBI:59789"/>
    </ligand>
</feature>
<feature type="binding site" evidence="1">
    <location>
        <position position="189"/>
    </location>
    <ligand>
        <name>S-adenosyl-L-methionine</name>
        <dbReference type="ChEBI" id="CHEBI:59789"/>
    </ligand>
</feature>
<feature type="binding site" evidence="1">
    <location>
        <position position="234"/>
    </location>
    <ligand>
        <name>S-adenosyl-L-methionine</name>
        <dbReference type="ChEBI" id="CHEBI:59789"/>
    </ligand>
</feature>
<sequence>MKWLQIHITVDQEQVEFTETLLMSLGAVSVTLDDAEDQALLEPLPGETPLWNKVIVTGIYQQDEQDPIDVDTLEAFLKAQLPDVPMRHEELEDQVWERAWMDYYEPIQIGEKFWIVPEWLEPPEADATNIKLDPGLAFGTGNHASTFLCLQWLGKTDVKNKIVIDYGCGSGILGVAALLLGAKKVYATDIDPQAVLATKQNAELNGVLDRLYVGLPEEFDQEFKPQQADVLVANILAGPLMALAPEFAKLLKSDGDFALAGVIEEQVVDVSGVYSEFFDILDVEKREENWCRISGKRKTTN</sequence>
<protein>
    <recommendedName>
        <fullName evidence="1">Ribosomal protein L11 methyltransferase</fullName>
        <shortName evidence="1">L11 Mtase</shortName>
        <ecNumber evidence="1">2.1.1.-</ecNumber>
    </recommendedName>
</protein>
<keyword id="KW-0963">Cytoplasm</keyword>
<keyword id="KW-0489">Methyltransferase</keyword>
<keyword id="KW-0949">S-adenosyl-L-methionine</keyword>
<keyword id="KW-0808">Transferase</keyword>
<organism>
    <name type="scientific">Acinetobacter baumannii (strain SDF)</name>
    <dbReference type="NCBI Taxonomy" id="509170"/>
    <lineage>
        <taxon>Bacteria</taxon>
        <taxon>Pseudomonadati</taxon>
        <taxon>Pseudomonadota</taxon>
        <taxon>Gammaproteobacteria</taxon>
        <taxon>Moraxellales</taxon>
        <taxon>Moraxellaceae</taxon>
        <taxon>Acinetobacter</taxon>
        <taxon>Acinetobacter calcoaceticus/baumannii complex</taxon>
    </lineage>
</organism>
<reference key="1">
    <citation type="journal article" date="2008" name="PLoS ONE">
        <title>Comparative analysis of Acinetobacters: three genomes for three lifestyles.</title>
        <authorList>
            <person name="Vallenet D."/>
            <person name="Nordmann P."/>
            <person name="Barbe V."/>
            <person name="Poirel L."/>
            <person name="Mangenot S."/>
            <person name="Bataille E."/>
            <person name="Dossat C."/>
            <person name="Gas S."/>
            <person name="Kreimeyer A."/>
            <person name="Lenoble P."/>
            <person name="Oztas S."/>
            <person name="Poulain J."/>
            <person name="Segurens B."/>
            <person name="Robert C."/>
            <person name="Abergel C."/>
            <person name="Claverie J.-M."/>
            <person name="Raoult D."/>
            <person name="Medigue C."/>
            <person name="Weissenbach J."/>
            <person name="Cruveiller S."/>
        </authorList>
    </citation>
    <scope>NUCLEOTIDE SEQUENCE [LARGE SCALE GENOMIC DNA]</scope>
    <source>
        <strain>SDF</strain>
    </source>
</reference>
<gene>
    <name evidence="1" type="primary">prmA</name>
    <name type="ordered locus">ABSDF1518</name>
</gene>
<name>PRMA_ACIBS</name>
<accession>B0VLL0</accession>
<dbReference type="EC" id="2.1.1.-" evidence="1"/>
<dbReference type="EMBL" id="CU468230">
    <property type="protein sequence ID" value="CAP00859.1"/>
    <property type="molecule type" value="Genomic_DNA"/>
</dbReference>
<dbReference type="SMR" id="B0VLL0"/>
<dbReference type="KEGG" id="abm:ABSDF1518"/>
<dbReference type="HOGENOM" id="CLU_049382_4_1_6"/>
<dbReference type="Proteomes" id="UP000001741">
    <property type="component" value="Chromosome"/>
</dbReference>
<dbReference type="GO" id="GO:0005829">
    <property type="term" value="C:cytosol"/>
    <property type="evidence" value="ECO:0007669"/>
    <property type="project" value="TreeGrafter"/>
</dbReference>
<dbReference type="GO" id="GO:0016279">
    <property type="term" value="F:protein-lysine N-methyltransferase activity"/>
    <property type="evidence" value="ECO:0007669"/>
    <property type="project" value="TreeGrafter"/>
</dbReference>
<dbReference type="GO" id="GO:0032259">
    <property type="term" value="P:methylation"/>
    <property type="evidence" value="ECO:0007669"/>
    <property type="project" value="UniProtKB-KW"/>
</dbReference>
<dbReference type="CDD" id="cd02440">
    <property type="entry name" value="AdoMet_MTases"/>
    <property type="match status" value="1"/>
</dbReference>
<dbReference type="Gene3D" id="3.40.50.150">
    <property type="entry name" value="Vaccinia Virus protein VP39"/>
    <property type="match status" value="1"/>
</dbReference>
<dbReference type="HAMAP" id="MF_00735">
    <property type="entry name" value="Methyltr_PrmA"/>
    <property type="match status" value="1"/>
</dbReference>
<dbReference type="InterPro" id="IPR050078">
    <property type="entry name" value="Ribosomal_L11_MeTrfase_PrmA"/>
</dbReference>
<dbReference type="InterPro" id="IPR004498">
    <property type="entry name" value="Ribosomal_PrmA_MeTrfase"/>
</dbReference>
<dbReference type="InterPro" id="IPR029063">
    <property type="entry name" value="SAM-dependent_MTases_sf"/>
</dbReference>
<dbReference type="NCBIfam" id="TIGR00406">
    <property type="entry name" value="prmA"/>
    <property type="match status" value="1"/>
</dbReference>
<dbReference type="PANTHER" id="PTHR43648">
    <property type="entry name" value="ELECTRON TRANSFER FLAVOPROTEIN BETA SUBUNIT LYSINE METHYLTRANSFERASE"/>
    <property type="match status" value="1"/>
</dbReference>
<dbReference type="PANTHER" id="PTHR43648:SF1">
    <property type="entry name" value="ELECTRON TRANSFER FLAVOPROTEIN BETA SUBUNIT LYSINE METHYLTRANSFERASE"/>
    <property type="match status" value="1"/>
</dbReference>
<dbReference type="Pfam" id="PF06325">
    <property type="entry name" value="PrmA"/>
    <property type="match status" value="1"/>
</dbReference>
<dbReference type="PIRSF" id="PIRSF000401">
    <property type="entry name" value="RPL11_MTase"/>
    <property type="match status" value="1"/>
</dbReference>
<dbReference type="SUPFAM" id="SSF53335">
    <property type="entry name" value="S-adenosyl-L-methionine-dependent methyltransferases"/>
    <property type="match status" value="1"/>
</dbReference>